<name>PYRG_DEHM1</name>
<gene>
    <name evidence="1" type="primary">pyrG</name>
    <name type="ordered locus">DET1410</name>
</gene>
<proteinExistence type="inferred from homology"/>
<keyword id="KW-0067">ATP-binding</keyword>
<keyword id="KW-0315">Glutamine amidotransferase</keyword>
<keyword id="KW-0436">Ligase</keyword>
<keyword id="KW-0460">Magnesium</keyword>
<keyword id="KW-0479">Metal-binding</keyword>
<keyword id="KW-0547">Nucleotide-binding</keyword>
<keyword id="KW-0665">Pyrimidine biosynthesis</keyword>
<sequence length="544" mass="60401">MSKFVFVTGGVVSSVGKGITVASLGNILKSRGLSVSVQKLDPYLNVDPGTMSPYQHGEVFVTQDGAETDLDLGSYERFIDIELTADSTVTSGQVYSEVINKERRGDYLGGTIQVVPHVTQEIKARIQRLADRSKADVVIVEVGGTVGDIEGQPFLEAIRQMRNDMGRDNVIYIHVTLLPYIQSTQELKTKPTQHSVNELRRIGIQPDIIVCRADYPISEGIRDKLSLFCDVERKAVIFMPTVSTIYEVPLKLESEGVGDLLVSRLHLNASPSDLSIWRGLVEKIKEPTPAVRIALVGKYVELKDAYYSVRESLCHAAIHNGRDIQIDWVYAEDIEKNGPEEYLKHVQGIIIPGGFGIRGIEGMITAVKYARENGIPYLGLCLGMQVMVIEFARHVLQSDKAHSTEFEPDSPYPVIDLLPEQRGVDSKGGTMRLGNYPCVIQPGTMAGQAYGNKLINERHRHRFEFNNDYRDTLSKAGMVFSGLSPDGKLVEICEVSGHPFMVGSQFHPEFLSRPNRPHPLFREFINAAKKVIRDGEQPSLPLSP</sequence>
<accession>Q3Z6N1</accession>
<evidence type="ECO:0000255" key="1">
    <source>
        <dbReference type="HAMAP-Rule" id="MF_01227"/>
    </source>
</evidence>
<comment type="function">
    <text evidence="1">Catalyzes the ATP-dependent amination of UTP to CTP with either L-glutamine or ammonia as the source of nitrogen. Regulates intracellular CTP levels through interactions with the four ribonucleotide triphosphates.</text>
</comment>
<comment type="catalytic activity">
    <reaction evidence="1">
        <text>UTP + L-glutamine + ATP + H2O = CTP + L-glutamate + ADP + phosphate + 2 H(+)</text>
        <dbReference type="Rhea" id="RHEA:26426"/>
        <dbReference type="ChEBI" id="CHEBI:15377"/>
        <dbReference type="ChEBI" id="CHEBI:15378"/>
        <dbReference type="ChEBI" id="CHEBI:29985"/>
        <dbReference type="ChEBI" id="CHEBI:30616"/>
        <dbReference type="ChEBI" id="CHEBI:37563"/>
        <dbReference type="ChEBI" id="CHEBI:43474"/>
        <dbReference type="ChEBI" id="CHEBI:46398"/>
        <dbReference type="ChEBI" id="CHEBI:58359"/>
        <dbReference type="ChEBI" id="CHEBI:456216"/>
        <dbReference type="EC" id="6.3.4.2"/>
    </reaction>
</comment>
<comment type="catalytic activity">
    <reaction evidence="1">
        <text>L-glutamine + H2O = L-glutamate + NH4(+)</text>
        <dbReference type="Rhea" id="RHEA:15889"/>
        <dbReference type="ChEBI" id="CHEBI:15377"/>
        <dbReference type="ChEBI" id="CHEBI:28938"/>
        <dbReference type="ChEBI" id="CHEBI:29985"/>
        <dbReference type="ChEBI" id="CHEBI:58359"/>
    </reaction>
</comment>
<comment type="catalytic activity">
    <reaction evidence="1">
        <text>UTP + NH4(+) + ATP = CTP + ADP + phosphate + 2 H(+)</text>
        <dbReference type="Rhea" id="RHEA:16597"/>
        <dbReference type="ChEBI" id="CHEBI:15378"/>
        <dbReference type="ChEBI" id="CHEBI:28938"/>
        <dbReference type="ChEBI" id="CHEBI:30616"/>
        <dbReference type="ChEBI" id="CHEBI:37563"/>
        <dbReference type="ChEBI" id="CHEBI:43474"/>
        <dbReference type="ChEBI" id="CHEBI:46398"/>
        <dbReference type="ChEBI" id="CHEBI:456216"/>
    </reaction>
</comment>
<comment type="activity regulation">
    <text evidence="1">Allosterically activated by GTP, when glutamine is the substrate; GTP has no effect on the reaction when ammonia is the substrate. The allosteric effector GTP functions by stabilizing the protein conformation that binds the tetrahedral intermediate(s) formed during glutamine hydrolysis. Inhibited by the product CTP, via allosteric rather than competitive inhibition.</text>
</comment>
<comment type="pathway">
    <text evidence="1">Pyrimidine metabolism; CTP biosynthesis via de novo pathway; CTP from UDP: step 2/2.</text>
</comment>
<comment type="subunit">
    <text evidence="1">Homotetramer.</text>
</comment>
<comment type="miscellaneous">
    <text evidence="1">CTPSs have evolved a hybrid strategy for distinguishing between UTP and CTP. The overlapping regions of the product feedback inhibitory and substrate sites recognize a common feature in both compounds, the triphosphate moiety. To differentiate isosteric substrate and product pyrimidine rings, an additional pocket far from the expected kinase/ligase catalytic site, specifically recognizes the cytosine and ribose portions of the product inhibitor.</text>
</comment>
<comment type="similarity">
    <text evidence="1">Belongs to the CTP synthase family.</text>
</comment>
<reference key="1">
    <citation type="journal article" date="2005" name="Science">
        <title>Genome sequence of the PCE-dechlorinating bacterium Dehalococcoides ethenogenes.</title>
        <authorList>
            <person name="Seshadri R."/>
            <person name="Adrian L."/>
            <person name="Fouts D.E."/>
            <person name="Eisen J.A."/>
            <person name="Phillippy A.M."/>
            <person name="Methe B.A."/>
            <person name="Ward N.L."/>
            <person name="Nelson W.C."/>
            <person name="DeBoy R.T."/>
            <person name="Khouri H.M."/>
            <person name="Kolonay J.F."/>
            <person name="Dodson R.J."/>
            <person name="Daugherty S.C."/>
            <person name="Brinkac L.M."/>
            <person name="Sullivan S.A."/>
            <person name="Madupu R."/>
            <person name="Nelson K.E."/>
            <person name="Kang K.H."/>
            <person name="Impraim M."/>
            <person name="Tran K."/>
            <person name="Robinson J.M."/>
            <person name="Forberger H.A."/>
            <person name="Fraser C.M."/>
            <person name="Zinder S.H."/>
            <person name="Heidelberg J.F."/>
        </authorList>
    </citation>
    <scope>NUCLEOTIDE SEQUENCE [LARGE SCALE GENOMIC DNA]</scope>
    <source>
        <strain>ATCC BAA-2266 / KCTC 15142 / 195</strain>
    </source>
</reference>
<dbReference type="EC" id="6.3.4.2" evidence="1"/>
<dbReference type="EMBL" id="CP000027">
    <property type="protein sequence ID" value="AAW39332.1"/>
    <property type="molecule type" value="Genomic_DNA"/>
</dbReference>
<dbReference type="RefSeq" id="WP_010937095.1">
    <property type="nucleotide sequence ID" value="NC_002936.3"/>
</dbReference>
<dbReference type="SMR" id="Q3Z6N1"/>
<dbReference type="FunCoup" id="Q3Z6N1">
    <property type="interactions" value="315"/>
</dbReference>
<dbReference type="STRING" id="243164.DET1410"/>
<dbReference type="MEROPS" id="C26.964"/>
<dbReference type="GeneID" id="3229290"/>
<dbReference type="KEGG" id="det:DET1410"/>
<dbReference type="PATRIC" id="fig|243164.10.peg.1337"/>
<dbReference type="eggNOG" id="COG0504">
    <property type="taxonomic scope" value="Bacteria"/>
</dbReference>
<dbReference type="HOGENOM" id="CLU_011675_5_0_0"/>
<dbReference type="InParanoid" id="Q3Z6N1"/>
<dbReference type="UniPathway" id="UPA00159">
    <property type="reaction ID" value="UER00277"/>
</dbReference>
<dbReference type="Proteomes" id="UP000008289">
    <property type="component" value="Chromosome"/>
</dbReference>
<dbReference type="GO" id="GO:0005829">
    <property type="term" value="C:cytosol"/>
    <property type="evidence" value="ECO:0007669"/>
    <property type="project" value="TreeGrafter"/>
</dbReference>
<dbReference type="GO" id="GO:0005524">
    <property type="term" value="F:ATP binding"/>
    <property type="evidence" value="ECO:0007669"/>
    <property type="project" value="UniProtKB-KW"/>
</dbReference>
<dbReference type="GO" id="GO:0003883">
    <property type="term" value="F:CTP synthase activity"/>
    <property type="evidence" value="ECO:0007669"/>
    <property type="project" value="UniProtKB-UniRule"/>
</dbReference>
<dbReference type="GO" id="GO:0004359">
    <property type="term" value="F:glutaminase activity"/>
    <property type="evidence" value="ECO:0007669"/>
    <property type="project" value="RHEA"/>
</dbReference>
<dbReference type="GO" id="GO:0042802">
    <property type="term" value="F:identical protein binding"/>
    <property type="evidence" value="ECO:0007669"/>
    <property type="project" value="TreeGrafter"/>
</dbReference>
<dbReference type="GO" id="GO:0046872">
    <property type="term" value="F:metal ion binding"/>
    <property type="evidence" value="ECO:0007669"/>
    <property type="project" value="UniProtKB-KW"/>
</dbReference>
<dbReference type="GO" id="GO:0044210">
    <property type="term" value="P:'de novo' CTP biosynthetic process"/>
    <property type="evidence" value="ECO:0007669"/>
    <property type="project" value="UniProtKB-UniRule"/>
</dbReference>
<dbReference type="GO" id="GO:0019856">
    <property type="term" value="P:pyrimidine nucleobase biosynthetic process"/>
    <property type="evidence" value="ECO:0007669"/>
    <property type="project" value="TreeGrafter"/>
</dbReference>
<dbReference type="CDD" id="cd03113">
    <property type="entry name" value="CTPS_N"/>
    <property type="match status" value="1"/>
</dbReference>
<dbReference type="CDD" id="cd01746">
    <property type="entry name" value="GATase1_CTP_Synthase"/>
    <property type="match status" value="1"/>
</dbReference>
<dbReference type="FunFam" id="3.40.50.300:FF:000009">
    <property type="entry name" value="CTP synthase"/>
    <property type="match status" value="1"/>
</dbReference>
<dbReference type="FunFam" id="3.40.50.880:FF:000002">
    <property type="entry name" value="CTP synthase"/>
    <property type="match status" value="1"/>
</dbReference>
<dbReference type="Gene3D" id="3.40.50.880">
    <property type="match status" value="1"/>
</dbReference>
<dbReference type="Gene3D" id="3.40.50.300">
    <property type="entry name" value="P-loop containing nucleotide triphosphate hydrolases"/>
    <property type="match status" value="1"/>
</dbReference>
<dbReference type="HAMAP" id="MF_01227">
    <property type="entry name" value="PyrG"/>
    <property type="match status" value="1"/>
</dbReference>
<dbReference type="InterPro" id="IPR029062">
    <property type="entry name" value="Class_I_gatase-like"/>
</dbReference>
<dbReference type="InterPro" id="IPR004468">
    <property type="entry name" value="CTP_synthase"/>
</dbReference>
<dbReference type="InterPro" id="IPR017456">
    <property type="entry name" value="CTP_synthase_N"/>
</dbReference>
<dbReference type="InterPro" id="IPR017926">
    <property type="entry name" value="GATASE"/>
</dbReference>
<dbReference type="InterPro" id="IPR033828">
    <property type="entry name" value="GATase1_CTP_Synthase"/>
</dbReference>
<dbReference type="InterPro" id="IPR027417">
    <property type="entry name" value="P-loop_NTPase"/>
</dbReference>
<dbReference type="NCBIfam" id="NF003792">
    <property type="entry name" value="PRK05380.1"/>
    <property type="match status" value="1"/>
</dbReference>
<dbReference type="NCBIfam" id="TIGR00337">
    <property type="entry name" value="PyrG"/>
    <property type="match status" value="1"/>
</dbReference>
<dbReference type="PANTHER" id="PTHR11550">
    <property type="entry name" value="CTP SYNTHASE"/>
    <property type="match status" value="1"/>
</dbReference>
<dbReference type="PANTHER" id="PTHR11550:SF0">
    <property type="entry name" value="CTP SYNTHASE-RELATED"/>
    <property type="match status" value="1"/>
</dbReference>
<dbReference type="Pfam" id="PF06418">
    <property type="entry name" value="CTP_synth_N"/>
    <property type="match status" value="1"/>
</dbReference>
<dbReference type="Pfam" id="PF00117">
    <property type="entry name" value="GATase"/>
    <property type="match status" value="1"/>
</dbReference>
<dbReference type="SUPFAM" id="SSF52317">
    <property type="entry name" value="Class I glutamine amidotransferase-like"/>
    <property type="match status" value="1"/>
</dbReference>
<dbReference type="SUPFAM" id="SSF52540">
    <property type="entry name" value="P-loop containing nucleoside triphosphate hydrolases"/>
    <property type="match status" value="1"/>
</dbReference>
<dbReference type="PROSITE" id="PS51273">
    <property type="entry name" value="GATASE_TYPE_1"/>
    <property type="match status" value="1"/>
</dbReference>
<feature type="chain" id="PRO_0000266104" description="CTP synthase">
    <location>
        <begin position="1"/>
        <end position="544"/>
    </location>
</feature>
<feature type="domain" description="Glutamine amidotransferase type-1" evidence="1">
    <location>
        <begin position="299"/>
        <end position="534"/>
    </location>
</feature>
<feature type="region of interest" description="Amidoligase domain" evidence="1">
    <location>
        <begin position="1"/>
        <end position="267"/>
    </location>
</feature>
<feature type="active site" description="Nucleophile; for glutamine hydrolysis" evidence="1">
    <location>
        <position position="381"/>
    </location>
</feature>
<feature type="active site" evidence="1">
    <location>
        <position position="507"/>
    </location>
</feature>
<feature type="active site" evidence="1">
    <location>
        <position position="509"/>
    </location>
</feature>
<feature type="binding site" evidence="1">
    <location>
        <position position="13"/>
    </location>
    <ligand>
        <name>CTP</name>
        <dbReference type="ChEBI" id="CHEBI:37563"/>
        <note>allosteric inhibitor</note>
    </ligand>
</feature>
<feature type="binding site" evidence="1">
    <location>
        <position position="13"/>
    </location>
    <ligand>
        <name>UTP</name>
        <dbReference type="ChEBI" id="CHEBI:46398"/>
    </ligand>
</feature>
<feature type="binding site" evidence="1">
    <location>
        <begin position="14"/>
        <end position="19"/>
    </location>
    <ligand>
        <name>ATP</name>
        <dbReference type="ChEBI" id="CHEBI:30616"/>
    </ligand>
</feature>
<feature type="binding site" evidence="1">
    <location>
        <position position="54"/>
    </location>
    <ligand>
        <name>L-glutamine</name>
        <dbReference type="ChEBI" id="CHEBI:58359"/>
    </ligand>
</feature>
<feature type="binding site" evidence="1">
    <location>
        <position position="71"/>
    </location>
    <ligand>
        <name>ATP</name>
        <dbReference type="ChEBI" id="CHEBI:30616"/>
    </ligand>
</feature>
<feature type="binding site" evidence="1">
    <location>
        <position position="71"/>
    </location>
    <ligand>
        <name>Mg(2+)</name>
        <dbReference type="ChEBI" id="CHEBI:18420"/>
    </ligand>
</feature>
<feature type="binding site" evidence="1">
    <location>
        <position position="141"/>
    </location>
    <ligand>
        <name>Mg(2+)</name>
        <dbReference type="ChEBI" id="CHEBI:18420"/>
    </ligand>
</feature>
<feature type="binding site" evidence="1">
    <location>
        <begin position="148"/>
        <end position="150"/>
    </location>
    <ligand>
        <name>CTP</name>
        <dbReference type="ChEBI" id="CHEBI:37563"/>
        <note>allosteric inhibitor</note>
    </ligand>
</feature>
<feature type="binding site" evidence="1">
    <location>
        <begin position="188"/>
        <end position="193"/>
    </location>
    <ligand>
        <name>CTP</name>
        <dbReference type="ChEBI" id="CHEBI:37563"/>
        <note>allosteric inhibitor</note>
    </ligand>
</feature>
<feature type="binding site" evidence="1">
    <location>
        <begin position="188"/>
        <end position="193"/>
    </location>
    <ligand>
        <name>UTP</name>
        <dbReference type="ChEBI" id="CHEBI:46398"/>
    </ligand>
</feature>
<feature type="binding site" evidence="1">
    <location>
        <position position="224"/>
    </location>
    <ligand>
        <name>CTP</name>
        <dbReference type="ChEBI" id="CHEBI:37563"/>
        <note>allosteric inhibitor</note>
    </ligand>
</feature>
<feature type="binding site" evidence="1">
    <location>
        <position position="224"/>
    </location>
    <ligand>
        <name>UTP</name>
        <dbReference type="ChEBI" id="CHEBI:46398"/>
    </ligand>
</feature>
<feature type="binding site" evidence="1">
    <location>
        <position position="354"/>
    </location>
    <ligand>
        <name>L-glutamine</name>
        <dbReference type="ChEBI" id="CHEBI:58359"/>
    </ligand>
</feature>
<feature type="binding site" evidence="1">
    <location>
        <begin position="382"/>
        <end position="385"/>
    </location>
    <ligand>
        <name>L-glutamine</name>
        <dbReference type="ChEBI" id="CHEBI:58359"/>
    </ligand>
</feature>
<feature type="binding site" evidence="1">
    <location>
        <position position="405"/>
    </location>
    <ligand>
        <name>L-glutamine</name>
        <dbReference type="ChEBI" id="CHEBI:58359"/>
    </ligand>
</feature>
<feature type="binding site" evidence="1">
    <location>
        <position position="462"/>
    </location>
    <ligand>
        <name>L-glutamine</name>
        <dbReference type="ChEBI" id="CHEBI:58359"/>
    </ligand>
</feature>
<organism>
    <name type="scientific">Dehalococcoides mccartyi (strain ATCC BAA-2266 / KCTC 15142 / 195)</name>
    <name type="common">Dehalococcoides ethenogenes (strain 195)</name>
    <dbReference type="NCBI Taxonomy" id="243164"/>
    <lineage>
        <taxon>Bacteria</taxon>
        <taxon>Bacillati</taxon>
        <taxon>Chloroflexota</taxon>
        <taxon>Dehalococcoidia</taxon>
        <taxon>Dehalococcoidales</taxon>
        <taxon>Dehalococcoidaceae</taxon>
        <taxon>Dehalococcoides</taxon>
    </lineage>
</organism>
<protein>
    <recommendedName>
        <fullName evidence="1">CTP synthase</fullName>
        <ecNumber evidence="1">6.3.4.2</ecNumber>
    </recommendedName>
    <alternativeName>
        <fullName evidence="1">Cytidine 5'-triphosphate synthase</fullName>
    </alternativeName>
    <alternativeName>
        <fullName evidence="1">Cytidine triphosphate synthetase</fullName>
        <shortName evidence="1">CTP synthetase</shortName>
        <shortName evidence="1">CTPS</shortName>
    </alternativeName>
    <alternativeName>
        <fullName evidence="1">UTP--ammonia ligase</fullName>
    </alternativeName>
</protein>